<proteinExistence type="inferred from homology"/>
<accession>Q5YS08</accession>
<keyword id="KW-0963">Cytoplasm</keyword>
<keyword id="KW-0255">Endonuclease</keyword>
<keyword id="KW-0378">Hydrolase</keyword>
<keyword id="KW-0460">Magnesium</keyword>
<keyword id="KW-0479">Metal-binding</keyword>
<keyword id="KW-0507">mRNA processing</keyword>
<keyword id="KW-0540">Nuclease</keyword>
<keyword id="KW-1185">Reference proteome</keyword>
<keyword id="KW-0694">RNA-binding</keyword>
<keyword id="KW-0698">rRNA processing</keyword>
<keyword id="KW-0699">rRNA-binding</keyword>
<keyword id="KW-0819">tRNA processing</keyword>
<comment type="function">
    <text evidence="1">Digests double-stranded RNA. Involved in the processing of primary rRNA transcript to yield the immediate precursors to the large and small rRNAs (23S and 16S). Processes some mRNAs, and tRNAs when they are encoded in the rRNA operon. Processes pre-crRNA and tracrRNA of type II CRISPR loci if present in the organism.</text>
</comment>
<comment type="catalytic activity">
    <reaction evidence="1">
        <text>Endonucleolytic cleavage to 5'-phosphomonoester.</text>
        <dbReference type="EC" id="3.1.26.3"/>
    </reaction>
</comment>
<comment type="cofactor">
    <cofactor evidence="1">
        <name>Mg(2+)</name>
        <dbReference type="ChEBI" id="CHEBI:18420"/>
    </cofactor>
</comment>
<comment type="subunit">
    <text evidence="1">Homodimer.</text>
</comment>
<comment type="subcellular location">
    <subcellularLocation>
        <location evidence="1">Cytoplasm</location>
    </subcellularLocation>
</comment>
<comment type="similarity">
    <text evidence="1">Belongs to the ribonuclease III family.</text>
</comment>
<sequence length="240" mass="25346">MTASKDDAGASDDHASLLEALGVDVRPDLLRLALTHRSYAYENGGLPTNERLEFLGDSVLGLSITERLYHEHPDKSEGELAKLRASVVNMHALAEVARGLGEGGLGAHLLLGKGEELTGGRDKPSILADGMESLLGAVHLQHGIDVARGVVLRLFADLLERGPRMGAGLDWKTSLQELTAERGLGVPSYEISSTGPDHDKEFTATTVIGGRAYGQGVGRSKKEAEQKAAGAAYQALTAES</sequence>
<gene>
    <name evidence="1" type="primary">rnc</name>
    <name type="ordered locus">NFA_41840</name>
</gene>
<protein>
    <recommendedName>
        <fullName evidence="1">Ribonuclease 3</fullName>
        <ecNumber evidence="1">3.1.26.3</ecNumber>
    </recommendedName>
    <alternativeName>
        <fullName evidence="1">Ribonuclease III</fullName>
        <shortName evidence="1">RNase III</shortName>
    </alternativeName>
</protein>
<organism>
    <name type="scientific">Nocardia farcinica (strain IFM 10152)</name>
    <dbReference type="NCBI Taxonomy" id="247156"/>
    <lineage>
        <taxon>Bacteria</taxon>
        <taxon>Bacillati</taxon>
        <taxon>Actinomycetota</taxon>
        <taxon>Actinomycetes</taxon>
        <taxon>Mycobacteriales</taxon>
        <taxon>Nocardiaceae</taxon>
        <taxon>Nocardia</taxon>
    </lineage>
</organism>
<feature type="chain" id="PRO_0000228557" description="Ribonuclease 3">
    <location>
        <begin position="1"/>
        <end position="240"/>
    </location>
</feature>
<feature type="domain" description="RNase III" evidence="1">
    <location>
        <begin position="13"/>
        <end position="143"/>
    </location>
</feature>
<feature type="domain" description="DRBM" evidence="1">
    <location>
        <begin position="170"/>
        <end position="238"/>
    </location>
</feature>
<feature type="active site" evidence="1">
    <location>
        <position position="57"/>
    </location>
</feature>
<feature type="active site" evidence="1">
    <location>
        <position position="132"/>
    </location>
</feature>
<feature type="binding site" evidence="1">
    <location>
        <position position="53"/>
    </location>
    <ligand>
        <name>Mg(2+)</name>
        <dbReference type="ChEBI" id="CHEBI:18420"/>
    </ligand>
</feature>
<feature type="binding site" evidence="1">
    <location>
        <position position="129"/>
    </location>
    <ligand>
        <name>Mg(2+)</name>
        <dbReference type="ChEBI" id="CHEBI:18420"/>
    </ligand>
</feature>
<feature type="binding site" evidence="1">
    <location>
        <position position="132"/>
    </location>
    <ligand>
        <name>Mg(2+)</name>
        <dbReference type="ChEBI" id="CHEBI:18420"/>
    </ligand>
</feature>
<evidence type="ECO:0000255" key="1">
    <source>
        <dbReference type="HAMAP-Rule" id="MF_00104"/>
    </source>
</evidence>
<name>RNC_NOCFA</name>
<reference key="1">
    <citation type="journal article" date="2004" name="Proc. Natl. Acad. Sci. U.S.A.">
        <title>The complete genomic sequence of Nocardia farcinica IFM 10152.</title>
        <authorList>
            <person name="Ishikawa J."/>
            <person name="Yamashita A."/>
            <person name="Mikami Y."/>
            <person name="Hoshino Y."/>
            <person name="Kurita H."/>
            <person name="Hotta K."/>
            <person name="Shiba T."/>
            <person name="Hattori M."/>
        </authorList>
    </citation>
    <scope>NUCLEOTIDE SEQUENCE [LARGE SCALE GENOMIC DNA]</scope>
    <source>
        <strain>IFM 10152</strain>
    </source>
</reference>
<dbReference type="EC" id="3.1.26.3" evidence="1"/>
<dbReference type="EMBL" id="AP006618">
    <property type="protein sequence ID" value="BAD59033.1"/>
    <property type="molecule type" value="Genomic_DNA"/>
</dbReference>
<dbReference type="RefSeq" id="WP_011210718.1">
    <property type="nucleotide sequence ID" value="NC_006361.1"/>
</dbReference>
<dbReference type="SMR" id="Q5YS08"/>
<dbReference type="STRING" id="247156.NFA_41840"/>
<dbReference type="GeneID" id="61134819"/>
<dbReference type="KEGG" id="nfa:NFA_41840"/>
<dbReference type="eggNOG" id="COG0571">
    <property type="taxonomic scope" value="Bacteria"/>
</dbReference>
<dbReference type="HOGENOM" id="CLU_000907_1_2_11"/>
<dbReference type="OrthoDB" id="9805026at2"/>
<dbReference type="Proteomes" id="UP000006820">
    <property type="component" value="Chromosome"/>
</dbReference>
<dbReference type="GO" id="GO:0005737">
    <property type="term" value="C:cytoplasm"/>
    <property type="evidence" value="ECO:0007669"/>
    <property type="project" value="UniProtKB-SubCell"/>
</dbReference>
<dbReference type="GO" id="GO:0003725">
    <property type="term" value="F:double-stranded RNA binding"/>
    <property type="evidence" value="ECO:0007669"/>
    <property type="project" value="TreeGrafter"/>
</dbReference>
<dbReference type="GO" id="GO:0046872">
    <property type="term" value="F:metal ion binding"/>
    <property type="evidence" value="ECO:0007669"/>
    <property type="project" value="UniProtKB-KW"/>
</dbReference>
<dbReference type="GO" id="GO:0004525">
    <property type="term" value="F:ribonuclease III activity"/>
    <property type="evidence" value="ECO:0007669"/>
    <property type="project" value="UniProtKB-UniRule"/>
</dbReference>
<dbReference type="GO" id="GO:0019843">
    <property type="term" value="F:rRNA binding"/>
    <property type="evidence" value="ECO:0007669"/>
    <property type="project" value="UniProtKB-KW"/>
</dbReference>
<dbReference type="GO" id="GO:0006397">
    <property type="term" value="P:mRNA processing"/>
    <property type="evidence" value="ECO:0007669"/>
    <property type="project" value="UniProtKB-UniRule"/>
</dbReference>
<dbReference type="GO" id="GO:0010468">
    <property type="term" value="P:regulation of gene expression"/>
    <property type="evidence" value="ECO:0007669"/>
    <property type="project" value="TreeGrafter"/>
</dbReference>
<dbReference type="GO" id="GO:0006364">
    <property type="term" value="P:rRNA processing"/>
    <property type="evidence" value="ECO:0007669"/>
    <property type="project" value="UniProtKB-UniRule"/>
</dbReference>
<dbReference type="GO" id="GO:0008033">
    <property type="term" value="P:tRNA processing"/>
    <property type="evidence" value="ECO:0007669"/>
    <property type="project" value="UniProtKB-KW"/>
</dbReference>
<dbReference type="CDD" id="cd10845">
    <property type="entry name" value="DSRM_RNAse_III_family"/>
    <property type="match status" value="1"/>
</dbReference>
<dbReference type="CDD" id="cd00593">
    <property type="entry name" value="RIBOc"/>
    <property type="match status" value="1"/>
</dbReference>
<dbReference type="FunFam" id="1.10.1520.10:FF:000001">
    <property type="entry name" value="Ribonuclease 3"/>
    <property type="match status" value="1"/>
</dbReference>
<dbReference type="FunFam" id="3.30.160.20:FF:000003">
    <property type="entry name" value="Ribonuclease 3"/>
    <property type="match status" value="1"/>
</dbReference>
<dbReference type="Gene3D" id="3.30.160.20">
    <property type="match status" value="1"/>
</dbReference>
<dbReference type="Gene3D" id="1.10.1520.10">
    <property type="entry name" value="Ribonuclease III domain"/>
    <property type="match status" value="1"/>
</dbReference>
<dbReference type="HAMAP" id="MF_00104">
    <property type="entry name" value="RNase_III"/>
    <property type="match status" value="1"/>
</dbReference>
<dbReference type="InterPro" id="IPR014720">
    <property type="entry name" value="dsRBD_dom"/>
</dbReference>
<dbReference type="InterPro" id="IPR011907">
    <property type="entry name" value="RNase_III"/>
</dbReference>
<dbReference type="InterPro" id="IPR000999">
    <property type="entry name" value="RNase_III_dom"/>
</dbReference>
<dbReference type="InterPro" id="IPR036389">
    <property type="entry name" value="RNase_III_sf"/>
</dbReference>
<dbReference type="NCBIfam" id="TIGR02191">
    <property type="entry name" value="RNaseIII"/>
    <property type="match status" value="1"/>
</dbReference>
<dbReference type="PANTHER" id="PTHR11207:SF0">
    <property type="entry name" value="RIBONUCLEASE 3"/>
    <property type="match status" value="1"/>
</dbReference>
<dbReference type="PANTHER" id="PTHR11207">
    <property type="entry name" value="RIBONUCLEASE III"/>
    <property type="match status" value="1"/>
</dbReference>
<dbReference type="Pfam" id="PF00035">
    <property type="entry name" value="dsrm"/>
    <property type="match status" value="1"/>
</dbReference>
<dbReference type="Pfam" id="PF14622">
    <property type="entry name" value="Ribonucleas_3_3"/>
    <property type="match status" value="1"/>
</dbReference>
<dbReference type="SMART" id="SM00358">
    <property type="entry name" value="DSRM"/>
    <property type="match status" value="1"/>
</dbReference>
<dbReference type="SMART" id="SM00535">
    <property type="entry name" value="RIBOc"/>
    <property type="match status" value="1"/>
</dbReference>
<dbReference type="SUPFAM" id="SSF54768">
    <property type="entry name" value="dsRNA-binding domain-like"/>
    <property type="match status" value="1"/>
</dbReference>
<dbReference type="SUPFAM" id="SSF69065">
    <property type="entry name" value="RNase III domain-like"/>
    <property type="match status" value="1"/>
</dbReference>
<dbReference type="PROSITE" id="PS50137">
    <property type="entry name" value="DS_RBD"/>
    <property type="match status" value="1"/>
</dbReference>
<dbReference type="PROSITE" id="PS00517">
    <property type="entry name" value="RNASE_3_1"/>
    <property type="match status" value="1"/>
</dbReference>
<dbReference type="PROSITE" id="PS50142">
    <property type="entry name" value="RNASE_3_2"/>
    <property type="match status" value="1"/>
</dbReference>